<reference key="1">
    <citation type="journal article" date="2015" name="Genome Announc.">
        <title>Complete Genome Sequence of Methanosphaerula palustris E1-9CT, a Hydrogenotrophic Methanogen Isolated from a Minerotrophic Fen Peatland.</title>
        <authorList>
            <person name="Cadillo-Quiroz H."/>
            <person name="Browne P."/>
            <person name="Kyrpides N."/>
            <person name="Woyke T."/>
            <person name="Goodwin L."/>
            <person name="Detter C."/>
            <person name="Yavitt J.B."/>
            <person name="Zinder S.H."/>
        </authorList>
    </citation>
    <scope>NUCLEOTIDE SEQUENCE [LARGE SCALE GENOMIC DNA]</scope>
    <source>
        <strain>ATCC BAA-1556 / DSM 19958 / E1-9c</strain>
    </source>
</reference>
<organism>
    <name type="scientific">Methanosphaerula palustris (strain ATCC BAA-1556 / DSM 19958 / E1-9c)</name>
    <dbReference type="NCBI Taxonomy" id="521011"/>
    <lineage>
        <taxon>Archaea</taxon>
        <taxon>Methanobacteriati</taxon>
        <taxon>Methanobacteriota</taxon>
        <taxon>Stenosarchaea group</taxon>
        <taxon>Methanomicrobia</taxon>
        <taxon>Methanomicrobiales</taxon>
        <taxon>Methanoregulaceae</taxon>
        <taxon>Methanosphaerula</taxon>
    </lineage>
</organism>
<sequence>MVRKPGKMYRNLAKKAYTRRKYMGGVPGSKIVQFEMGNLSQEFPVEISLEVLESCQIRHTALEAARIAINRKMMDQVGRANFHFKIRTYPHHVLRENKQATGAGADRVSEGMRMAFGKAVGTAARVQPKQKVFTVYTNEQYIEKSKDALRHGGYKLPSPARLVIERVPVDNTQ</sequence>
<proteinExistence type="inferred from homology"/>
<name>RL10E_METPE</name>
<gene>
    <name evidence="1" type="primary">rpl10e</name>
    <name type="ordered locus">Mpal_1074</name>
</gene>
<comment type="similarity">
    <text evidence="1">Belongs to the universal ribosomal protein uL16 family.</text>
</comment>
<dbReference type="EMBL" id="CP001338">
    <property type="protein sequence ID" value="ACL16420.1"/>
    <property type="molecule type" value="Genomic_DNA"/>
</dbReference>
<dbReference type="RefSeq" id="WP_012617739.1">
    <property type="nucleotide sequence ID" value="NC_011832.1"/>
</dbReference>
<dbReference type="SMR" id="B8GH15"/>
<dbReference type="STRING" id="521011.Mpal_1074"/>
<dbReference type="GeneID" id="7270990"/>
<dbReference type="KEGG" id="mpl:Mpal_1074"/>
<dbReference type="eggNOG" id="arCOG04113">
    <property type="taxonomic scope" value="Archaea"/>
</dbReference>
<dbReference type="HOGENOM" id="CLU_084051_0_2_2"/>
<dbReference type="OrthoDB" id="30538at2157"/>
<dbReference type="Proteomes" id="UP000002457">
    <property type="component" value="Chromosome"/>
</dbReference>
<dbReference type="GO" id="GO:1990904">
    <property type="term" value="C:ribonucleoprotein complex"/>
    <property type="evidence" value="ECO:0007669"/>
    <property type="project" value="UniProtKB-KW"/>
</dbReference>
<dbReference type="GO" id="GO:0005840">
    <property type="term" value="C:ribosome"/>
    <property type="evidence" value="ECO:0007669"/>
    <property type="project" value="UniProtKB-KW"/>
</dbReference>
<dbReference type="GO" id="GO:0003735">
    <property type="term" value="F:structural constituent of ribosome"/>
    <property type="evidence" value="ECO:0007669"/>
    <property type="project" value="InterPro"/>
</dbReference>
<dbReference type="GO" id="GO:0006412">
    <property type="term" value="P:translation"/>
    <property type="evidence" value="ECO:0007669"/>
    <property type="project" value="UniProtKB-UniRule"/>
</dbReference>
<dbReference type="CDD" id="cd01433">
    <property type="entry name" value="Ribosomal_L16_L10e"/>
    <property type="match status" value="1"/>
</dbReference>
<dbReference type="Gene3D" id="3.90.1170.10">
    <property type="entry name" value="Ribosomal protein L10e/L16"/>
    <property type="match status" value="1"/>
</dbReference>
<dbReference type="HAMAP" id="MF_00448">
    <property type="entry name" value="Ribosomal_uL16_arch"/>
    <property type="match status" value="1"/>
</dbReference>
<dbReference type="InterPro" id="IPR047873">
    <property type="entry name" value="Ribosomal_uL16"/>
</dbReference>
<dbReference type="InterPro" id="IPR022981">
    <property type="entry name" value="Ribosomal_uL16_arc"/>
</dbReference>
<dbReference type="InterPro" id="IPR018255">
    <property type="entry name" value="Ribosomal_uL16_CS_euk_arc"/>
</dbReference>
<dbReference type="InterPro" id="IPR016180">
    <property type="entry name" value="Ribosomal_uL16_dom"/>
</dbReference>
<dbReference type="InterPro" id="IPR001197">
    <property type="entry name" value="Ribosomal_uL16_euk_arch"/>
</dbReference>
<dbReference type="InterPro" id="IPR036920">
    <property type="entry name" value="Ribosomal_uL16_sf"/>
</dbReference>
<dbReference type="NCBIfam" id="NF003238">
    <property type="entry name" value="PRK04199.1-3"/>
    <property type="match status" value="1"/>
</dbReference>
<dbReference type="NCBIfam" id="NF003239">
    <property type="entry name" value="PRK04199.1-4"/>
    <property type="match status" value="1"/>
</dbReference>
<dbReference type="PANTHER" id="PTHR11726">
    <property type="entry name" value="60S RIBOSOMAL PROTEIN L10"/>
    <property type="match status" value="1"/>
</dbReference>
<dbReference type="Pfam" id="PF00252">
    <property type="entry name" value="Ribosomal_L16"/>
    <property type="match status" value="1"/>
</dbReference>
<dbReference type="PIRSF" id="PIRSF005590">
    <property type="entry name" value="Ribosomal_L10"/>
    <property type="match status" value="1"/>
</dbReference>
<dbReference type="SUPFAM" id="SSF54686">
    <property type="entry name" value="Ribosomal protein L16p/L10e"/>
    <property type="match status" value="1"/>
</dbReference>
<dbReference type="PROSITE" id="PS01257">
    <property type="entry name" value="RIBOSOMAL_L10E"/>
    <property type="match status" value="1"/>
</dbReference>
<feature type="chain" id="PRO_1000135237" description="Large ribosomal subunit protein uL16">
    <location>
        <begin position="1"/>
        <end position="173"/>
    </location>
</feature>
<keyword id="KW-1185">Reference proteome</keyword>
<keyword id="KW-0687">Ribonucleoprotein</keyword>
<keyword id="KW-0689">Ribosomal protein</keyword>
<evidence type="ECO:0000255" key="1">
    <source>
        <dbReference type="HAMAP-Rule" id="MF_00448"/>
    </source>
</evidence>
<evidence type="ECO:0000305" key="2"/>
<accession>B8GH15</accession>
<protein>
    <recommendedName>
        <fullName evidence="1">Large ribosomal subunit protein uL16</fullName>
    </recommendedName>
    <alternativeName>
        <fullName evidence="2">50S ribosomal protein L10e</fullName>
    </alternativeName>
</protein>